<accession>P31236</accession>
<reference key="1">
    <citation type="journal article" date="1987" name="Biochemistry">
        <title>Characterization of cardiac calsequestrin.</title>
        <authorList>
            <person name="Slupsky J.R."/>
            <person name="Ohnishi M."/>
            <person name="Carpenter M.R."/>
            <person name="Reithmeier R.A.F."/>
        </authorList>
    </citation>
    <scope>PROTEIN SEQUENCE</scope>
</reference>
<reference key="2">
    <citation type="journal article" date="2004" name="J. Biol. Chem.">
        <title>Comparing skeletal and cardiac calsequestrin structures and their calcium binding: a proposed mechanism for coupled calcium binding and protein polymerization.</title>
        <authorList>
            <person name="Park H."/>
            <person name="Park I.Y."/>
            <person name="Kim E."/>
            <person name="Youn B."/>
            <person name="Fields K."/>
            <person name="Dunker A.K."/>
            <person name="Kang C."/>
        </authorList>
    </citation>
    <scope>FUNCTION</scope>
    <scope>CALCIUM AFFINITY</scope>
</reference>
<name>CASQ1_CANLF</name>
<evidence type="ECO:0000250" key="1">
    <source>
        <dbReference type="UniProtKB" id="O09165"/>
    </source>
</evidence>
<evidence type="ECO:0000250" key="2">
    <source>
        <dbReference type="UniProtKB" id="P07221"/>
    </source>
</evidence>
<evidence type="ECO:0000250" key="3">
    <source>
        <dbReference type="UniProtKB" id="P19633"/>
    </source>
</evidence>
<evidence type="ECO:0000250" key="4">
    <source>
        <dbReference type="UniProtKB" id="P31415"/>
    </source>
</evidence>
<evidence type="ECO:0000269" key="5">
    <source>
    </source>
</evidence>
<evidence type="ECO:0000305" key="6"/>
<keyword id="KW-0106">Calcium</keyword>
<keyword id="KW-0903">Direct protein sequencing</keyword>
<keyword id="KW-0256">Endoplasmic reticulum</keyword>
<keyword id="KW-0472">Membrane</keyword>
<keyword id="KW-0479">Metal-binding</keyword>
<keyword id="KW-0496">Mitochondrion</keyword>
<keyword id="KW-0514">Muscle protein</keyword>
<keyword id="KW-0597">Phosphoprotein</keyword>
<keyword id="KW-1185">Reference proteome</keyword>
<keyword id="KW-0703">Sarcoplasmic reticulum</keyword>
<organism>
    <name type="scientific">Canis lupus familiaris</name>
    <name type="common">Dog</name>
    <name type="synonym">Canis familiaris</name>
    <dbReference type="NCBI Taxonomy" id="9615"/>
    <lineage>
        <taxon>Eukaryota</taxon>
        <taxon>Metazoa</taxon>
        <taxon>Chordata</taxon>
        <taxon>Craniata</taxon>
        <taxon>Vertebrata</taxon>
        <taxon>Euteleostomi</taxon>
        <taxon>Mammalia</taxon>
        <taxon>Eutheria</taxon>
        <taxon>Laurasiatheria</taxon>
        <taxon>Carnivora</taxon>
        <taxon>Caniformia</taxon>
        <taxon>Canidae</taxon>
        <taxon>Canis</taxon>
    </lineage>
</organism>
<gene>
    <name type="primary">CASQ1</name>
</gene>
<proteinExistence type="evidence at protein level"/>
<comment type="function">
    <text evidence="1 2 4 5">Calsequestrin is a high-capacity, moderate affinity, calcium-binding protein and thus acts as an internal calcium store in muscle (PubMed:14871888). Calcium ions are bound by clusters of acidic residues at the protein surface, often at the interface between subunits. Can bind around 80 Ca(2+) ions. Regulates the release of lumenal Ca(2+) via the calcium release channel RYR1; this plays an important role in triggering muscle contraction (By similarity). Negatively regulates store-operated Ca(2+) entry (SOCE) activity (By similarity).</text>
</comment>
<comment type="subunit">
    <text evidence="2 4">Monomer; increases in response to a depletion of intracellular calcium. Homodimer. Homotetramer and homopolymer. Can form linear homooligomers. Ca(2+) ions promote oligomerization. Interacts (via C-terminal end and preferentially with the monomeric form) with STIM1; this interaction increases in response to a depletion of intracellular calcium, decreases both STIM1 aggregation and clustering, interaction of STIM1 with ORAI1 and store-operated Ca(2+) entry (SOCE) activity. Interacts with ASPH and TRDN.</text>
</comment>
<comment type="subcellular location">
    <subcellularLocation>
        <location evidence="4">Endoplasmic reticulum</location>
    </subcellularLocation>
    <subcellularLocation>
        <location evidence="4">Sarcoplasmic reticulum</location>
    </subcellularLocation>
    <subcellularLocation>
        <location evidence="2">Sarcoplasmic reticulum lumen</location>
    </subcellularLocation>
    <subcellularLocation>
        <location>Sarcoplasmic reticulum membrane</location>
        <topology>Peripheral membrane protein</topology>
        <orientation evidence="2">Lumenal side</orientation>
    </subcellularLocation>
    <subcellularLocation>
        <location evidence="1">Mitochondrion matrix</location>
    </subcellularLocation>
    <text evidence="2 4">This isoform of calsequestrin occurs in the sarcoplasmic reticulum's terminal cisternae luminal spaces of fast skeletal muscle cells. Preferentially forms linear and round aggregates in the endoplasmic reticulum (ER) of resting cells. In a minority of cells, homogeneously detected in the ER lumen. Colocalizes with STIM1 at endoplasmic reticulum in response to a depletion of intracellular calcium.</text>
</comment>
<comment type="PTM">
    <text evidence="2">N-glycosylated.</text>
</comment>
<comment type="similarity">
    <text evidence="6">Belongs to the calsequestrin family.</text>
</comment>
<feature type="chain" id="PRO_0000144071" description="Calsequestrin-1">
    <location>
        <begin position="1"/>
        <end position="56" status="greater than"/>
    </location>
</feature>
<feature type="modified residue" description="Phosphotyrosine" evidence="3">
    <location>
        <position position="9"/>
    </location>
</feature>
<feature type="modified residue" description="Phosphoserine" evidence="3">
    <location>
        <position position="47"/>
    </location>
</feature>
<feature type="non-terminal residue">
    <location>
        <position position="56"/>
    </location>
</feature>
<sequence>EEGLDFPEYDGVDRVVNVNAKNYKNVFKKYEVLALLYHEPPXXDKASQRQFDMEEL</sequence>
<protein>
    <recommendedName>
        <fullName>Calsequestrin-1</fullName>
    </recommendedName>
    <alternativeName>
        <fullName>Calsequestrin, skeletal muscle isoform</fullName>
    </alternativeName>
</protein>
<dbReference type="PIR" id="B27499">
    <property type="entry name" value="B27499"/>
</dbReference>
<dbReference type="PaxDb" id="9612-ENSCAFP00000018363"/>
<dbReference type="eggNOG" id="ENOG502QQUJ">
    <property type="taxonomic scope" value="Eukaryota"/>
</dbReference>
<dbReference type="InParanoid" id="P31236"/>
<dbReference type="OrthoDB" id="10038131at2759"/>
<dbReference type="Proteomes" id="UP000002254">
    <property type="component" value="Unplaced"/>
</dbReference>
<dbReference type="Proteomes" id="UP000694429">
    <property type="component" value="Unplaced"/>
</dbReference>
<dbReference type="Proteomes" id="UP000694542">
    <property type="component" value="Unplaced"/>
</dbReference>
<dbReference type="Proteomes" id="UP000805418">
    <property type="component" value="Unplaced"/>
</dbReference>
<dbReference type="GO" id="GO:0005783">
    <property type="term" value="C:endoplasmic reticulum"/>
    <property type="evidence" value="ECO:0000250"/>
    <property type="project" value="UniProtKB"/>
</dbReference>
<dbReference type="GO" id="GO:0005759">
    <property type="term" value="C:mitochondrial matrix"/>
    <property type="evidence" value="ECO:0007669"/>
    <property type="project" value="UniProtKB-SubCell"/>
</dbReference>
<dbReference type="GO" id="GO:0033018">
    <property type="term" value="C:sarcoplasmic reticulum lumen"/>
    <property type="evidence" value="ECO:0007669"/>
    <property type="project" value="UniProtKB-SubCell"/>
</dbReference>
<dbReference type="GO" id="GO:0033017">
    <property type="term" value="C:sarcoplasmic reticulum membrane"/>
    <property type="evidence" value="ECO:0007669"/>
    <property type="project" value="UniProtKB-SubCell"/>
</dbReference>
<dbReference type="GO" id="GO:0005509">
    <property type="term" value="F:calcium ion binding"/>
    <property type="evidence" value="ECO:0000250"/>
    <property type="project" value="UniProtKB"/>
</dbReference>
<dbReference type="GO" id="GO:0042802">
    <property type="term" value="F:identical protein binding"/>
    <property type="evidence" value="ECO:0000250"/>
    <property type="project" value="UniProtKB"/>
</dbReference>
<dbReference type="GO" id="GO:0051281">
    <property type="term" value="P:positive regulation of release of sequestered calcium ion into cytosol"/>
    <property type="evidence" value="ECO:0000250"/>
    <property type="project" value="UniProtKB"/>
</dbReference>
<dbReference type="GO" id="GO:1901341">
    <property type="term" value="P:positive regulation of store-operated calcium channel activity"/>
    <property type="evidence" value="ECO:0000250"/>
    <property type="project" value="UniProtKB"/>
</dbReference>
<dbReference type="GO" id="GO:2001256">
    <property type="term" value="P:regulation of store-operated calcium entry"/>
    <property type="evidence" value="ECO:0000250"/>
    <property type="project" value="UniProtKB"/>
</dbReference>
<dbReference type="FunFam" id="3.40.30.10:FF:001018">
    <property type="entry name" value="Calsequestrin-1"/>
    <property type="match status" value="1"/>
</dbReference>
<dbReference type="Gene3D" id="3.40.30.10">
    <property type="entry name" value="Glutaredoxin"/>
    <property type="match status" value="1"/>
</dbReference>
<dbReference type="InterPro" id="IPR001393">
    <property type="entry name" value="Calsequestrin"/>
</dbReference>
<dbReference type="InterPro" id="IPR018233">
    <property type="entry name" value="Calsequestrin_CS"/>
</dbReference>
<dbReference type="PANTHER" id="PTHR10033">
    <property type="entry name" value="CALSEQUESTRIN"/>
    <property type="match status" value="1"/>
</dbReference>
<dbReference type="PANTHER" id="PTHR10033:SF14">
    <property type="entry name" value="CALSEQUESTRIN-1"/>
    <property type="match status" value="1"/>
</dbReference>
<dbReference type="Pfam" id="PF01216">
    <property type="entry name" value="Calsequestrin"/>
    <property type="match status" value="1"/>
</dbReference>
<dbReference type="PRINTS" id="PR00312">
    <property type="entry name" value="CALSEQUESTRN"/>
</dbReference>
<dbReference type="PROSITE" id="PS00863">
    <property type="entry name" value="CALSEQUESTRIN_1"/>
    <property type="match status" value="1"/>
</dbReference>